<comment type="function">
    <text evidence="1 4">NAD-dependent protein deacetylase, which deacetylates internal lysines on histone and alpha-tubulin as well as many other proteins such as key transcription factors (By similarity). Participates in the modulation of multiple and diverse biological processes such as cell cycle control, genomic integrity, microtubule dynamics, cell differentiation, metabolic networks, and autophagy. Plays a major role in the control of cell cycle progression and genomic stability. Deacetylates histone H4 at 'Lys-16' (H4K16ac) at the VEGFA promoter (PubMed:24940000). Thereby contributes to regulate expression of vegfa, a key regulator of angiogenesis (PubMed:24940000). In addition to protein deacetylase activity, also has activity toward long-chain fatty acyl groups and mediates protein-lysine demyristoylation and depalmitoylation of target proteins (By similarity).</text>
</comment>
<comment type="catalytic activity">
    <reaction evidence="2 6">
        <text>N(6)-acetyl-L-lysyl-[protein] + NAD(+) + H2O = 2''-O-acetyl-ADP-D-ribose + nicotinamide + L-lysyl-[protein]</text>
        <dbReference type="Rhea" id="RHEA:43636"/>
        <dbReference type="Rhea" id="RHEA-COMP:9752"/>
        <dbReference type="Rhea" id="RHEA-COMP:10731"/>
        <dbReference type="ChEBI" id="CHEBI:15377"/>
        <dbReference type="ChEBI" id="CHEBI:17154"/>
        <dbReference type="ChEBI" id="CHEBI:29969"/>
        <dbReference type="ChEBI" id="CHEBI:57540"/>
        <dbReference type="ChEBI" id="CHEBI:61930"/>
        <dbReference type="ChEBI" id="CHEBI:83767"/>
        <dbReference type="EC" id="2.3.1.286"/>
    </reaction>
</comment>
<comment type="catalytic activity">
    <reaction evidence="1">
        <text>N(6)-tetradecanoyl-L-lysyl-[protein] + NAD(+) + H2O = 2''-O-tetradecanoyl-ADP-D-ribose + nicotinamide + L-lysyl-[protein]</text>
        <dbReference type="Rhea" id="RHEA:70567"/>
        <dbReference type="Rhea" id="RHEA-COMP:9752"/>
        <dbReference type="Rhea" id="RHEA-COMP:15437"/>
        <dbReference type="ChEBI" id="CHEBI:15377"/>
        <dbReference type="ChEBI" id="CHEBI:17154"/>
        <dbReference type="ChEBI" id="CHEBI:29969"/>
        <dbReference type="ChEBI" id="CHEBI:57540"/>
        <dbReference type="ChEBI" id="CHEBI:141129"/>
        <dbReference type="ChEBI" id="CHEBI:189674"/>
    </reaction>
    <physiologicalReaction direction="left-to-right" evidence="1">
        <dbReference type="Rhea" id="RHEA:70568"/>
    </physiologicalReaction>
</comment>
<comment type="catalytic activity">
    <reaction evidence="1">
        <text>N(6)-hexadecanoyl-L-lysyl-[protein] + NAD(+) + H2O = 2''-O-hexadecanoyl-ADP-D-ribose + nicotinamide + L-lysyl-[protein]</text>
        <dbReference type="Rhea" id="RHEA:70563"/>
        <dbReference type="Rhea" id="RHEA-COMP:9752"/>
        <dbReference type="Rhea" id="RHEA-COMP:14175"/>
        <dbReference type="ChEBI" id="CHEBI:15377"/>
        <dbReference type="ChEBI" id="CHEBI:17154"/>
        <dbReference type="ChEBI" id="CHEBI:29969"/>
        <dbReference type="ChEBI" id="CHEBI:57540"/>
        <dbReference type="ChEBI" id="CHEBI:138936"/>
        <dbReference type="ChEBI" id="CHEBI:189673"/>
    </reaction>
    <physiologicalReaction direction="left-to-right" evidence="1">
        <dbReference type="Rhea" id="RHEA:70564"/>
    </physiologicalReaction>
</comment>
<comment type="cofactor">
    <cofactor evidence="1">
        <name>Zn(2+)</name>
        <dbReference type="ChEBI" id="CHEBI:29105"/>
    </cofactor>
    <text evidence="1">Binds 1 zinc ion per subunit.</text>
</comment>
<comment type="subcellular location">
    <subcellularLocation>
        <location evidence="1">Cytoplasm</location>
    </subcellularLocation>
    <subcellularLocation>
        <location evidence="1">Nucleus</location>
    </subcellularLocation>
</comment>
<comment type="disruption phenotype">
    <text evidence="4">Morpholino knockdown causes aberrant angiogenesis with excessive intersegmental vessel branching, due to excessive expression of vegfa.</text>
</comment>
<comment type="similarity">
    <text evidence="5">Belongs to the sirtuin family. Class I subfamily.</text>
</comment>
<keyword id="KW-0963">Cytoplasm</keyword>
<keyword id="KW-0479">Metal-binding</keyword>
<keyword id="KW-0520">NAD</keyword>
<keyword id="KW-0539">Nucleus</keyword>
<keyword id="KW-1185">Reference proteome</keyword>
<keyword id="KW-0808">Transferase</keyword>
<keyword id="KW-0862">Zinc</keyword>
<name>SIR2_DANRE</name>
<sequence>MSEEVSKRVEEEADTPGLEGQSDDSSDEGDASGDTEMDFLRSLFSRTLGLSPGDKVLDELTLDSVARYILSGKCKNIICMVGAGISTSAGIPDFRSPGTGLYANLQKYNLPYPEAIFQIDYFKKHPEPFFALARELYPGQFKPTVYHYFIKMLKDKGLLRRCYSQNIDTLERVAGLEGEDLIEAHGTFHTSHCVSFLCRKEYSMDWMKNQIFSEEIPKCDSCGSLVKPDIVFFGESLPSRFFTSMKADFPQCDLLIIMGTSLQVQPFASLVSRVSNRCPRLLINMEKTGQSEFGMGLFSFGGGMDFDSDKAYRDVAHLSTCDDGCMTLAELLGWKKELEEMVKREHALIDSKDAKKTDKEASQSSKSAVAEAEKTDKTE</sequence>
<evidence type="ECO:0000250" key="1">
    <source>
        <dbReference type="UniProtKB" id="Q8IXJ6"/>
    </source>
</evidence>
<evidence type="ECO:0000255" key="2">
    <source>
        <dbReference type="PROSITE-ProRule" id="PRU00236"/>
    </source>
</evidence>
<evidence type="ECO:0000256" key="3">
    <source>
        <dbReference type="SAM" id="MobiDB-lite"/>
    </source>
</evidence>
<evidence type="ECO:0000269" key="4">
    <source>
    </source>
</evidence>
<evidence type="ECO:0000305" key="5"/>
<evidence type="ECO:0000305" key="6">
    <source>
    </source>
</evidence>
<protein>
    <recommendedName>
        <fullName>NAD-dependent protein deacetylase sirtuin-2</fullName>
        <ecNumber evidence="2 6">2.3.1.286</ecNumber>
    </recommendedName>
    <alternativeName>
        <fullName evidence="5">NAD-dependent protein defatty-acylase sirtuin-2</fullName>
        <ecNumber evidence="1">2.3.1.-</ecNumber>
    </alternativeName>
    <alternativeName>
        <fullName>Regulatory protein SIR2 homolog 2</fullName>
    </alternativeName>
    <alternativeName>
        <fullName>SIR2-like protein 2</fullName>
    </alternativeName>
</protein>
<dbReference type="EC" id="2.3.1.286" evidence="2 6"/>
<dbReference type="EC" id="2.3.1.-" evidence="1"/>
<dbReference type="EMBL" id="BC045510">
    <property type="protein sequence ID" value="AAH45510.1"/>
    <property type="molecule type" value="mRNA"/>
</dbReference>
<dbReference type="RefSeq" id="NP_955890.1">
    <property type="nucleotide sequence ID" value="NM_199596.1"/>
</dbReference>
<dbReference type="SMR" id="Q7ZVK3"/>
<dbReference type="FunCoup" id="Q7ZVK3">
    <property type="interactions" value="1275"/>
</dbReference>
<dbReference type="STRING" id="7955.ENSDARP00000003412"/>
<dbReference type="PaxDb" id="7955-ENSDARP00000003412"/>
<dbReference type="GeneID" id="322309"/>
<dbReference type="KEGG" id="dre:322309"/>
<dbReference type="AGR" id="ZFIN:ZDB-GENE-030131-1028"/>
<dbReference type="CTD" id="22933"/>
<dbReference type="ZFIN" id="ZDB-GENE-030131-1028">
    <property type="gene designation" value="sirt2"/>
</dbReference>
<dbReference type="eggNOG" id="KOG2682">
    <property type="taxonomic scope" value="Eukaryota"/>
</dbReference>
<dbReference type="InParanoid" id="Q7ZVK3"/>
<dbReference type="OrthoDB" id="420264at2759"/>
<dbReference type="PhylomeDB" id="Q7ZVK3"/>
<dbReference type="Reactome" id="R-DRE-2995383">
    <property type="pathway name" value="Initiation of Nuclear Envelope (NE) Reformation"/>
</dbReference>
<dbReference type="PRO" id="PR:Q7ZVK3"/>
<dbReference type="Proteomes" id="UP000000437">
    <property type="component" value="Chromosome 15"/>
</dbReference>
<dbReference type="GO" id="GO:0005814">
    <property type="term" value="C:centriole"/>
    <property type="evidence" value="ECO:0000250"/>
    <property type="project" value="UniProtKB"/>
</dbReference>
<dbReference type="GO" id="GO:0005813">
    <property type="term" value="C:centrosome"/>
    <property type="evidence" value="ECO:0000250"/>
    <property type="project" value="UniProtKB"/>
</dbReference>
<dbReference type="GO" id="GO:0005694">
    <property type="term" value="C:chromosome"/>
    <property type="evidence" value="ECO:0000250"/>
    <property type="project" value="UniProtKB"/>
</dbReference>
<dbReference type="GO" id="GO:0005737">
    <property type="term" value="C:cytoplasm"/>
    <property type="evidence" value="ECO:0000250"/>
    <property type="project" value="UniProtKB"/>
</dbReference>
<dbReference type="GO" id="GO:0005829">
    <property type="term" value="C:cytosol"/>
    <property type="evidence" value="ECO:0000250"/>
    <property type="project" value="UniProtKB"/>
</dbReference>
<dbReference type="GO" id="GO:0097386">
    <property type="term" value="C:glial cell projection"/>
    <property type="evidence" value="ECO:0000250"/>
    <property type="project" value="UniProtKB"/>
</dbReference>
<dbReference type="GO" id="GO:0000792">
    <property type="term" value="C:heterochromatin"/>
    <property type="evidence" value="ECO:0000250"/>
    <property type="project" value="UniProtKB"/>
</dbReference>
<dbReference type="GO" id="GO:0044224">
    <property type="term" value="C:juxtaparanode region of axon"/>
    <property type="evidence" value="ECO:0000250"/>
    <property type="project" value="UniProtKB"/>
</dbReference>
<dbReference type="GO" id="GO:0072687">
    <property type="term" value="C:meiotic spindle"/>
    <property type="evidence" value="ECO:0000250"/>
    <property type="project" value="UniProtKB"/>
</dbReference>
<dbReference type="GO" id="GO:0030496">
    <property type="term" value="C:midbody"/>
    <property type="evidence" value="ECO:0000250"/>
    <property type="project" value="UniProtKB"/>
</dbReference>
<dbReference type="GO" id="GO:0072686">
    <property type="term" value="C:mitotic spindle"/>
    <property type="evidence" value="ECO:0000250"/>
    <property type="project" value="UniProtKB"/>
</dbReference>
<dbReference type="GO" id="GO:0043209">
    <property type="term" value="C:myelin sheath"/>
    <property type="evidence" value="ECO:0000250"/>
    <property type="project" value="UniProtKB"/>
</dbReference>
<dbReference type="GO" id="GO:0005634">
    <property type="term" value="C:nucleus"/>
    <property type="evidence" value="ECO:0000250"/>
    <property type="project" value="UniProtKB"/>
</dbReference>
<dbReference type="GO" id="GO:0033010">
    <property type="term" value="C:paranodal junction"/>
    <property type="evidence" value="ECO:0000250"/>
    <property type="project" value="UniProtKB"/>
</dbReference>
<dbReference type="GO" id="GO:0033270">
    <property type="term" value="C:paranode region of axon"/>
    <property type="evidence" value="ECO:0000250"/>
    <property type="project" value="UniProtKB"/>
</dbReference>
<dbReference type="GO" id="GO:0043204">
    <property type="term" value="C:perikaryon"/>
    <property type="evidence" value="ECO:0000250"/>
    <property type="project" value="UniProtKB"/>
</dbReference>
<dbReference type="GO" id="GO:0048471">
    <property type="term" value="C:perinuclear region of cytoplasm"/>
    <property type="evidence" value="ECO:0000250"/>
    <property type="project" value="UniProtKB"/>
</dbReference>
<dbReference type="GO" id="GO:0043220">
    <property type="term" value="C:Schmidt-Lanterman incisure"/>
    <property type="evidence" value="ECO:0000250"/>
    <property type="project" value="UniProtKB"/>
</dbReference>
<dbReference type="GO" id="GO:0005819">
    <property type="term" value="C:spindle"/>
    <property type="evidence" value="ECO:0000250"/>
    <property type="project" value="UniProtKB"/>
</dbReference>
<dbReference type="GO" id="GO:0004407">
    <property type="term" value="F:histone deacetylase activity"/>
    <property type="evidence" value="ECO:0000250"/>
    <property type="project" value="UniProtKB"/>
</dbReference>
<dbReference type="GO" id="GO:0017136">
    <property type="term" value="F:histone deacetylase activity, NAD-dependent"/>
    <property type="evidence" value="ECO:0000318"/>
    <property type="project" value="GO_Central"/>
</dbReference>
<dbReference type="GO" id="GO:0046970">
    <property type="term" value="F:histone H4K16 deacetylase activity, NAD-dependent"/>
    <property type="evidence" value="ECO:0000250"/>
    <property type="project" value="UniProtKB"/>
</dbReference>
<dbReference type="GO" id="GO:0046872">
    <property type="term" value="F:metal ion binding"/>
    <property type="evidence" value="ECO:0007669"/>
    <property type="project" value="UniProtKB-KW"/>
</dbReference>
<dbReference type="GO" id="GO:0070403">
    <property type="term" value="F:NAD+ binding"/>
    <property type="evidence" value="ECO:0000318"/>
    <property type="project" value="GO_Central"/>
</dbReference>
<dbReference type="GO" id="GO:0140773">
    <property type="term" value="F:NAD-dependent protein demyristoylase activity"/>
    <property type="evidence" value="ECO:0000250"/>
    <property type="project" value="UniProtKB"/>
</dbReference>
<dbReference type="GO" id="GO:0140774">
    <property type="term" value="F:NAD-dependent protein depalmitoylase activity"/>
    <property type="evidence" value="ECO:0000250"/>
    <property type="project" value="UniProtKB"/>
</dbReference>
<dbReference type="GO" id="GO:0034979">
    <property type="term" value="F:NAD-dependent protein lysine deacetylase activity"/>
    <property type="evidence" value="ECO:0000250"/>
    <property type="project" value="UniProtKB"/>
</dbReference>
<dbReference type="GO" id="GO:0042903">
    <property type="term" value="F:tubulin deacetylase activity"/>
    <property type="evidence" value="ECO:0000250"/>
    <property type="project" value="UniProtKB"/>
</dbReference>
<dbReference type="GO" id="GO:0061433">
    <property type="term" value="P:cellular response to caloric restriction"/>
    <property type="evidence" value="ECO:0000250"/>
    <property type="project" value="UniProtKB"/>
</dbReference>
<dbReference type="GO" id="GO:0071456">
    <property type="term" value="P:cellular response to hypoxia"/>
    <property type="evidence" value="ECO:0000250"/>
    <property type="project" value="UniProtKB"/>
</dbReference>
<dbReference type="GO" id="GO:0034599">
    <property type="term" value="P:cellular response to oxidative stress"/>
    <property type="evidence" value="ECO:0000250"/>
    <property type="project" value="UniProtKB"/>
</dbReference>
<dbReference type="GO" id="GO:0060271">
    <property type="term" value="P:cilium assembly"/>
    <property type="evidence" value="ECO:0000315"/>
    <property type="project" value="ZFIN"/>
</dbReference>
<dbReference type="GO" id="GO:0030097">
    <property type="term" value="P:hemopoiesis"/>
    <property type="evidence" value="ECO:0000315"/>
    <property type="project" value="ZFIN"/>
</dbReference>
<dbReference type="GO" id="GO:0016525">
    <property type="term" value="P:negative regulation of angiogenesis"/>
    <property type="evidence" value="ECO:0000315"/>
    <property type="project" value="ZFIN"/>
</dbReference>
<dbReference type="GO" id="GO:0010507">
    <property type="term" value="P:negative regulation of autophagy"/>
    <property type="evidence" value="ECO:0000250"/>
    <property type="project" value="UniProtKB"/>
</dbReference>
<dbReference type="GO" id="GO:0070446">
    <property type="term" value="P:negative regulation of oligodendrocyte progenitor proliferation"/>
    <property type="evidence" value="ECO:0000250"/>
    <property type="project" value="UniProtKB"/>
</dbReference>
<dbReference type="GO" id="GO:0042177">
    <property type="term" value="P:negative regulation of protein catabolic process"/>
    <property type="evidence" value="ECO:0000250"/>
    <property type="project" value="UniProtKB"/>
</dbReference>
<dbReference type="GO" id="GO:2000378">
    <property type="term" value="P:negative regulation of reactive oxygen species metabolic process"/>
    <property type="evidence" value="ECO:0000250"/>
    <property type="project" value="UniProtKB"/>
</dbReference>
<dbReference type="GO" id="GO:0000122">
    <property type="term" value="P:negative regulation of transcription by RNA polymerase II"/>
    <property type="evidence" value="ECO:0000250"/>
    <property type="project" value="UniProtKB"/>
</dbReference>
<dbReference type="GO" id="GO:0043388">
    <property type="term" value="P:positive regulation of DNA binding"/>
    <property type="evidence" value="ECO:0000250"/>
    <property type="project" value="UniProtKB"/>
</dbReference>
<dbReference type="GO" id="GO:1900119">
    <property type="term" value="P:positive regulation of execution phase of apoptosis"/>
    <property type="evidence" value="ECO:0000250"/>
    <property type="project" value="UniProtKB"/>
</dbReference>
<dbReference type="GO" id="GO:0032436">
    <property type="term" value="P:positive regulation of proteasomal ubiquitin-dependent protein catabolic process"/>
    <property type="evidence" value="ECO:0000250"/>
    <property type="project" value="UniProtKB"/>
</dbReference>
<dbReference type="GO" id="GO:0045944">
    <property type="term" value="P:positive regulation of transcription by RNA polymerase II"/>
    <property type="evidence" value="ECO:0000250"/>
    <property type="project" value="UniProtKB"/>
</dbReference>
<dbReference type="GO" id="GO:0006476">
    <property type="term" value="P:protein deacetylation"/>
    <property type="evidence" value="ECO:0000250"/>
    <property type="project" value="UniProtKB"/>
</dbReference>
<dbReference type="GO" id="GO:0000183">
    <property type="term" value="P:rDNA heterochromatin formation"/>
    <property type="evidence" value="ECO:0000318"/>
    <property type="project" value="GO_Central"/>
</dbReference>
<dbReference type="GO" id="GO:0051726">
    <property type="term" value="P:regulation of cell cycle"/>
    <property type="evidence" value="ECO:0000250"/>
    <property type="project" value="UniProtKB"/>
</dbReference>
<dbReference type="GO" id="GO:0036269">
    <property type="term" value="P:swimming behavior"/>
    <property type="evidence" value="ECO:0000316"/>
    <property type="project" value="ZFIN"/>
</dbReference>
<dbReference type="GO" id="GO:0090042">
    <property type="term" value="P:tubulin deacetylation"/>
    <property type="evidence" value="ECO:0000250"/>
    <property type="project" value="UniProtKB"/>
</dbReference>
<dbReference type="CDD" id="cd01408">
    <property type="entry name" value="SIRT1"/>
    <property type="match status" value="1"/>
</dbReference>
<dbReference type="FunFam" id="3.30.1600.10:FF:000013">
    <property type="entry name" value="NAD-dependent protein deacetylase sirtuin-1"/>
    <property type="match status" value="1"/>
</dbReference>
<dbReference type="Gene3D" id="3.30.1600.10">
    <property type="entry name" value="SIR2/SIRT2 'Small Domain"/>
    <property type="match status" value="1"/>
</dbReference>
<dbReference type="Gene3D" id="3.40.50.1220">
    <property type="entry name" value="TPP-binding domain"/>
    <property type="match status" value="1"/>
</dbReference>
<dbReference type="InterPro" id="IPR029035">
    <property type="entry name" value="DHS-like_NAD/FAD-binding_dom"/>
</dbReference>
<dbReference type="InterPro" id="IPR050134">
    <property type="entry name" value="NAD-dep_sirtuin_deacylases"/>
</dbReference>
<dbReference type="InterPro" id="IPR003000">
    <property type="entry name" value="Sirtuin"/>
</dbReference>
<dbReference type="InterPro" id="IPR026591">
    <property type="entry name" value="Sirtuin_cat_small_dom_sf"/>
</dbReference>
<dbReference type="InterPro" id="IPR017328">
    <property type="entry name" value="Sirtuin_class_I"/>
</dbReference>
<dbReference type="InterPro" id="IPR026590">
    <property type="entry name" value="Ssirtuin_cat_dom"/>
</dbReference>
<dbReference type="PANTHER" id="PTHR11085:SF6">
    <property type="entry name" value="NAD-DEPENDENT PROTEIN DEACETYLASE SIRTUIN-2"/>
    <property type="match status" value="1"/>
</dbReference>
<dbReference type="PANTHER" id="PTHR11085">
    <property type="entry name" value="NAD-DEPENDENT PROTEIN DEACYLASE SIRTUIN-5, MITOCHONDRIAL-RELATED"/>
    <property type="match status" value="1"/>
</dbReference>
<dbReference type="Pfam" id="PF02146">
    <property type="entry name" value="SIR2"/>
    <property type="match status" value="1"/>
</dbReference>
<dbReference type="PIRSF" id="PIRSF037938">
    <property type="entry name" value="SIR2_euk"/>
    <property type="match status" value="1"/>
</dbReference>
<dbReference type="SUPFAM" id="SSF52467">
    <property type="entry name" value="DHS-like NAD/FAD-binding domain"/>
    <property type="match status" value="1"/>
</dbReference>
<dbReference type="PROSITE" id="PS50305">
    <property type="entry name" value="SIRTUIN"/>
    <property type="match status" value="1"/>
</dbReference>
<reference key="1">
    <citation type="submission" date="2003-01" db="EMBL/GenBank/DDBJ databases">
        <authorList>
            <consortium name="NIH - Zebrafish Gene Collection (ZGC) project"/>
        </authorList>
    </citation>
    <scope>NUCLEOTIDE SEQUENCE [LARGE SCALE MRNA]</scope>
    <source>
        <strain>AB</strain>
    </source>
</reference>
<reference key="2">
    <citation type="journal article" date="2014" name="Elife">
        <title>tRNA synthetase counteracts c-Myc to develop functional vasculature.</title>
        <authorList>
            <person name="Shi Y."/>
            <person name="Xu X."/>
            <person name="Zhang Q."/>
            <person name="Fu G."/>
            <person name="Mo Z."/>
            <person name="Wang G.S."/>
            <person name="Kishi S."/>
            <person name="Yang X.L."/>
        </authorList>
    </citation>
    <scope>FUNCTION IN REGULATION OF VEGFA EXPRESSION AND ANGIOGENESIS</scope>
    <scope>DISRUPTION PHENOTYPE</scope>
</reference>
<feature type="chain" id="PRO_0000110262" description="NAD-dependent protein deacetylase sirtuin-2">
    <location>
        <begin position="1"/>
        <end position="379"/>
    </location>
</feature>
<feature type="domain" description="Deacetylase sirtuin-type" evidence="2">
    <location>
        <begin position="55"/>
        <end position="335"/>
    </location>
</feature>
<feature type="region of interest" description="Disordered" evidence="3">
    <location>
        <begin position="1"/>
        <end position="32"/>
    </location>
</feature>
<feature type="region of interest" description="Disordered" evidence="3">
    <location>
        <begin position="349"/>
        <end position="379"/>
    </location>
</feature>
<feature type="compositionally biased region" description="Basic and acidic residues" evidence="3">
    <location>
        <begin position="1"/>
        <end position="10"/>
    </location>
</feature>
<feature type="compositionally biased region" description="Acidic residues" evidence="3">
    <location>
        <begin position="21"/>
        <end position="32"/>
    </location>
</feature>
<feature type="compositionally biased region" description="Basic and acidic residues" evidence="3">
    <location>
        <begin position="349"/>
        <end position="361"/>
    </location>
</feature>
<feature type="active site" description="Proton acceptor" evidence="2">
    <location>
        <position position="185"/>
    </location>
</feature>
<feature type="binding site" evidence="1">
    <location>
        <begin position="83"/>
        <end position="87"/>
    </location>
    <ligand>
        <name>NAD(+)</name>
        <dbReference type="ChEBI" id="CHEBI:57540"/>
    </ligand>
</feature>
<feature type="binding site" evidence="1">
    <location>
        <begin position="93"/>
        <end position="95"/>
    </location>
    <ligand>
        <name>NAD(+)</name>
        <dbReference type="ChEBI" id="CHEBI:57540"/>
    </ligand>
</feature>
<feature type="binding site" evidence="1">
    <location>
        <begin position="165"/>
        <end position="168"/>
    </location>
    <ligand>
        <name>NAD(+)</name>
        <dbReference type="ChEBI" id="CHEBI:57540"/>
    </ligand>
</feature>
<feature type="binding site" evidence="2">
    <location>
        <position position="193"/>
    </location>
    <ligand>
        <name>Zn(2+)</name>
        <dbReference type="ChEBI" id="CHEBI:29105"/>
    </ligand>
</feature>
<feature type="binding site" evidence="2">
    <location>
        <position position="198"/>
    </location>
    <ligand>
        <name>Zn(2+)</name>
        <dbReference type="ChEBI" id="CHEBI:29105"/>
    </ligand>
</feature>
<feature type="binding site" evidence="2">
    <location>
        <position position="219"/>
    </location>
    <ligand>
        <name>Zn(2+)</name>
        <dbReference type="ChEBI" id="CHEBI:29105"/>
    </ligand>
</feature>
<feature type="binding site" evidence="2">
    <location>
        <position position="222"/>
    </location>
    <ligand>
        <name>Zn(2+)</name>
        <dbReference type="ChEBI" id="CHEBI:29105"/>
    </ligand>
</feature>
<feature type="binding site" evidence="1">
    <location>
        <begin position="260"/>
        <end position="261"/>
    </location>
    <ligand>
        <name>NAD(+)</name>
        <dbReference type="ChEBI" id="CHEBI:57540"/>
    </ligand>
</feature>
<feature type="binding site" evidence="1">
    <location>
        <begin position="284"/>
        <end position="286"/>
    </location>
    <ligand>
        <name>NAD(+)</name>
        <dbReference type="ChEBI" id="CHEBI:57540"/>
    </ligand>
</feature>
<feature type="binding site" evidence="1">
    <location>
        <position position="321"/>
    </location>
    <ligand>
        <name>NAD(+)</name>
        <dbReference type="ChEBI" id="CHEBI:57540"/>
    </ligand>
</feature>
<gene>
    <name type="primary">sirt2</name>
    <name type="ORF">zgc:77003</name>
</gene>
<proteinExistence type="evidence at protein level"/>
<accession>Q7ZVK3</accession>
<organism>
    <name type="scientific">Danio rerio</name>
    <name type="common">Zebrafish</name>
    <name type="synonym">Brachydanio rerio</name>
    <dbReference type="NCBI Taxonomy" id="7955"/>
    <lineage>
        <taxon>Eukaryota</taxon>
        <taxon>Metazoa</taxon>
        <taxon>Chordata</taxon>
        <taxon>Craniata</taxon>
        <taxon>Vertebrata</taxon>
        <taxon>Euteleostomi</taxon>
        <taxon>Actinopterygii</taxon>
        <taxon>Neopterygii</taxon>
        <taxon>Teleostei</taxon>
        <taxon>Ostariophysi</taxon>
        <taxon>Cypriniformes</taxon>
        <taxon>Danionidae</taxon>
        <taxon>Danioninae</taxon>
        <taxon>Danio</taxon>
    </lineage>
</organism>